<accession>Q9KPZ7</accession>
<feature type="chain" id="PRO_0000046324" description="Copper-exporting P-type ATPase">
    <location>
        <begin position="1"/>
        <end position="915"/>
    </location>
</feature>
<feature type="transmembrane region" description="Helical" evidence="2">
    <location>
        <begin position="265"/>
        <end position="285"/>
    </location>
</feature>
<feature type="transmembrane region" description="Helical" evidence="2">
    <location>
        <begin position="293"/>
        <end position="313"/>
    </location>
</feature>
<feature type="transmembrane region" description="Helical" evidence="2">
    <location>
        <begin position="329"/>
        <end position="349"/>
    </location>
</feature>
<feature type="transmembrane region" description="Helical" evidence="2">
    <location>
        <begin position="359"/>
        <end position="379"/>
    </location>
</feature>
<feature type="transmembrane region" description="Helical" evidence="2">
    <location>
        <begin position="474"/>
        <end position="494"/>
    </location>
</feature>
<feature type="transmembrane region" description="Helical" evidence="2">
    <location>
        <begin position="514"/>
        <end position="534"/>
    </location>
</feature>
<feature type="transmembrane region" description="Helical" evidence="2">
    <location>
        <begin position="541"/>
        <end position="561"/>
    </location>
</feature>
<feature type="transmembrane region" description="Helical" evidence="2">
    <location>
        <begin position="801"/>
        <end position="821"/>
    </location>
</feature>
<feature type="transmembrane region" description="Helical" evidence="2">
    <location>
        <begin position="865"/>
        <end position="885"/>
    </location>
</feature>
<feature type="domain" description="HMA 1" evidence="3">
    <location>
        <begin position="11"/>
        <end position="72"/>
    </location>
</feature>
<feature type="domain" description="HMA 2" evidence="3">
    <location>
        <begin position="73"/>
        <end position="134"/>
    </location>
</feature>
<feature type="domain" description="HMA 3" evidence="3">
    <location>
        <begin position="172"/>
        <end position="236"/>
    </location>
</feature>
<feature type="region of interest" description="Disordered" evidence="4">
    <location>
        <begin position="142"/>
        <end position="169"/>
    </location>
</feature>
<feature type="compositionally biased region" description="Polar residues" evidence="4">
    <location>
        <begin position="158"/>
        <end position="169"/>
    </location>
</feature>
<feature type="active site" description="4-aspartylphosphate intermediate" evidence="5">
    <location>
        <position position="598"/>
    </location>
</feature>
<feature type="binding site" evidence="3">
    <location>
        <position position="22"/>
    </location>
    <ligand>
        <name>Cu(+)</name>
        <dbReference type="ChEBI" id="CHEBI:49552"/>
        <label>1</label>
    </ligand>
</feature>
<feature type="binding site" evidence="3">
    <location>
        <position position="25"/>
    </location>
    <ligand>
        <name>Cu(+)</name>
        <dbReference type="ChEBI" id="CHEBI:49552"/>
        <label>1</label>
    </ligand>
</feature>
<feature type="binding site" evidence="3">
    <location>
        <position position="84"/>
    </location>
    <ligand>
        <name>Cu(+)</name>
        <dbReference type="ChEBI" id="CHEBI:49552"/>
        <label>2</label>
    </ligand>
</feature>
<feature type="binding site" evidence="3">
    <location>
        <position position="87"/>
    </location>
    <ligand>
        <name>Cu(+)</name>
        <dbReference type="ChEBI" id="CHEBI:49552"/>
        <label>2</label>
    </ligand>
</feature>
<feature type="binding site" evidence="3">
    <location>
        <position position="183"/>
    </location>
    <ligand>
        <name>Cu(+)</name>
        <dbReference type="ChEBI" id="CHEBI:49552"/>
        <label>3</label>
    </ligand>
</feature>
<feature type="binding site" evidence="3">
    <location>
        <position position="186"/>
    </location>
    <ligand>
        <name>Cu(+)</name>
        <dbReference type="ChEBI" id="CHEBI:49552"/>
        <label>3</label>
    </ligand>
</feature>
<feature type="binding site">
    <location>
        <position position="796"/>
    </location>
    <ligand>
        <name>Mg(2+)</name>
        <dbReference type="ChEBI" id="CHEBI:18420"/>
    </ligand>
</feature>
<feature type="binding site">
    <location>
        <position position="800"/>
    </location>
    <ligand>
        <name>Mg(2+)</name>
        <dbReference type="ChEBI" id="CHEBI:18420"/>
    </ligand>
</feature>
<gene>
    <name type="primary">copA</name>
    <name type="ordered locus">VC_2215</name>
</gene>
<name>COPA_VIBCH</name>
<evidence type="ECO:0000250" key="1"/>
<evidence type="ECO:0000255" key="2"/>
<evidence type="ECO:0000255" key="3">
    <source>
        <dbReference type="PROSITE-ProRule" id="PRU00280"/>
    </source>
</evidence>
<evidence type="ECO:0000256" key="4">
    <source>
        <dbReference type="SAM" id="MobiDB-lite"/>
    </source>
</evidence>
<evidence type="ECO:0000305" key="5"/>
<sequence length="915" mass="97312">MDIPQGGVIMNHFALALRGLNCMGCARKLERQLNQDLTVEIETLTPTSIELHTHATLNEVLTSIESLGYQGGTEQTYQLQGLNCGRCVNKLTTHLSAQAEIAKLHVSKERLSLVTTLTAEQVKALVAEVGYQAIEAEQESTFAPAASIDEKETDTPDAENSSNTEATEASSQTLSLLIKGMTCASCVASVEKALLSVEGVQSAQVNLTEQSALVRGIFANPQPLLNAIQSSGYQAEILDDPAQQQAKQQAQLEALQKEHKQSALLGIALGTPLMLWGVFGGNMMIRNSSDQMVWGGIGTICFALLLTAGRHFFMNAWQALTHGRATMDTLVALGTGAAWFYSMLVVAWPQTFPDAARHVYFEATAMIIGLISLGHYIETKAKSNTNRSLQALLNLQPQQATLVTEQGDQSIAVADIQLGMSLRIKPGEQVPVDGVVSTGHSYLDESMLTGEPIPVLKEAGAKVAAGTLNQDGSLVITATGIGAQTMLARIIQMVRQAQSSKPAMARLADQISSVFVPVVVVIAILSAALWYLYGPDPKASYMLVVATTVLIIACPCALGLATPLSITVGIGKAAEMGILIRDANVLQTASQVDTVVFDKTGTLTLGKPSIQSLHVLQGDENQLLALAYALEQQSEHPLAKAICDYAKQRNISPVEISQFTNQRGRGLLADYQNQTVLVGSLAFMQEQGIDLSMAESTLEKFAAQAWTPVAVAYRGMLQGVLAIADPIKPTSAQAVRKLNELGIHTVMLTGDHTSVANAIAKELGISQVIAQVLPDQKAQHIQALQQQGRKVAMIGDGINDAPALALADIGIAMGSGSDVAIESAQMTLLNSSPTSVVSAIELSKATLRNMKQNLFGAFIYNTLGIPIAAGVLYPAFGFLLSPVVAGAAMALSSITVVSNANRLRWSKISFDQHSQ</sequence>
<dbReference type="EC" id="7.2.2.8"/>
<dbReference type="EMBL" id="AE003852">
    <property type="protein sequence ID" value="AAF95359.1"/>
    <property type="molecule type" value="Genomic_DNA"/>
</dbReference>
<dbReference type="PIR" id="H82104">
    <property type="entry name" value="H82104"/>
</dbReference>
<dbReference type="RefSeq" id="NP_231846.1">
    <property type="nucleotide sequence ID" value="NC_002505.1"/>
</dbReference>
<dbReference type="SMR" id="Q9KPZ7"/>
<dbReference type="STRING" id="243277.VC_2215"/>
<dbReference type="DNASU" id="2613254"/>
<dbReference type="EnsemblBacteria" id="AAF95359">
    <property type="protein sequence ID" value="AAF95359"/>
    <property type="gene ID" value="VC_2215"/>
</dbReference>
<dbReference type="KEGG" id="vch:VC_2215"/>
<dbReference type="PATRIC" id="fig|243277.26.peg.2113"/>
<dbReference type="eggNOG" id="COG2217">
    <property type="taxonomic scope" value="Bacteria"/>
</dbReference>
<dbReference type="eggNOG" id="COG2608">
    <property type="taxonomic scope" value="Bacteria"/>
</dbReference>
<dbReference type="HOGENOM" id="CLU_001771_5_1_6"/>
<dbReference type="Proteomes" id="UP000000584">
    <property type="component" value="Chromosome 1"/>
</dbReference>
<dbReference type="GO" id="GO:0016020">
    <property type="term" value="C:membrane"/>
    <property type="evidence" value="ECO:0000318"/>
    <property type="project" value="GO_Central"/>
</dbReference>
<dbReference type="GO" id="GO:0005886">
    <property type="term" value="C:plasma membrane"/>
    <property type="evidence" value="ECO:0007669"/>
    <property type="project" value="UniProtKB-SubCell"/>
</dbReference>
<dbReference type="GO" id="GO:0005524">
    <property type="term" value="F:ATP binding"/>
    <property type="evidence" value="ECO:0007669"/>
    <property type="project" value="UniProtKB-KW"/>
</dbReference>
<dbReference type="GO" id="GO:0016887">
    <property type="term" value="F:ATP hydrolysis activity"/>
    <property type="evidence" value="ECO:0007669"/>
    <property type="project" value="InterPro"/>
</dbReference>
<dbReference type="GO" id="GO:0005507">
    <property type="term" value="F:copper ion binding"/>
    <property type="evidence" value="ECO:0000318"/>
    <property type="project" value="GO_Central"/>
</dbReference>
<dbReference type="GO" id="GO:0043682">
    <property type="term" value="F:P-type divalent copper transporter activity"/>
    <property type="evidence" value="ECO:0000318"/>
    <property type="project" value="GO_Central"/>
</dbReference>
<dbReference type="GO" id="GO:0140581">
    <property type="term" value="F:P-type monovalent copper transporter activity"/>
    <property type="evidence" value="ECO:0007669"/>
    <property type="project" value="UniProtKB-EC"/>
</dbReference>
<dbReference type="GO" id="GO:0055070">
    <property type="term" value="P:copper ion homeostasis"/>
    <property type="evidence" value="ECO:0000318"/>
    <property type="project" value="GO_Central"/>
</dbReference>
<dbReference type="CDD" id="cd00371">
    <property type="entry name" value="HMA"/>
    <property type="match status" value="1"/>
</dbReference>
<dbReference type="CDD" id="cd02094">
    <property type="entry name" value="P-type_ATPase_Cu-like"/>
    <property type="match status" value="1"/>
</dbReference>
<dbReference type="FunFam" id="3.30.70.100:FF:000001">
    <property type="entry name" value="ATPase copper transporting beta"/>
    <property type="match status" value="1"/>
</dbReference>
<dbReference type="FunFam" id="2.70.150.10:FF:000020">
    <property type="entry name" value="Copper-exporting P-type ATPase A"/>
    <property type="match status" value="1"/>
</dbReference>
<dbReference type="Gene3D" id="3.30.70.100">
    <property type="match status" value="2"/>
</dbReference>
<dbReference type="Gene3D" id="3.40.1110.10">
    <property type="entry name" value="Calcium-transporting ATPase, cytoplasmic domain N"/>
    <property type="match status" value="1"/>
</dbReference>
<dbReference type="Gene3D" id="2.70.150.10">
    <property type="entry name" value="Calcium-transporting ATPase, cytoplasmic transduction domain A"/>
    <property type="match status" value="1"/>
</dbReference>
<dbReference type="Gene3D" id="3.40.50.1000">
    <property type="entry name" value="HAD superfamily/HAD-like"/>
    <property type="match status" value="1"/>
</dbReference>
<dbReference type="InterPro" id="IPR023299">
    <property type="entry name" value="ATPase_P-typ_cyto_dom_N"/>
</dbReference>
<dbReference type="InterPro" id="IPR018303">
    <property type="entry name" value="ATPase_P-typ_P_site"/>
</dbReference>
<dbReference type="InterPro" id="IPR023298">
    <property type="entry name" value="ATPase_P-typ_TM_dom_sf"/>
</dbReference>
<dbReference type="InterPro" id="IPR008250">
    <property type="entry name" value="ATPase_P-typ_transduc_dom_A_sf"/>
</dbReference>
<dbReference type="InterPro" id="IPR036412">
    <property type="entry name" value="HAD-like_sf"/>
</dbReference>
<dbReference type="InterPro" id="IPR023214">
    <property type="entry name" value="HAD_sf"/>
</dbReference>
<dbReference type="InterPro" id="IPR017969">
    <property type="entry name" value="Heavy-metal-associated_CS"/>
</dbReference>
<dbReference type="InterPro" id="IPR006121">
    <property type="entry name" value="HMA_dom"/>
</dbReference>
<dbReference type="InterPro" id="IPR036163">
    <property type="entry name" value="HMA_dom_sf"/>
</dbReference>
<dbReference type="InterPro" id="IPR027256">
    <property type="entry name" value="P-typ_ATPase_IB"/>
</dbReference>
<dbReference type="InterPro" id="IPR001757">
    <property type="entry name" value="P_typ_ATPase"/>
</dbReference>
<dbReference type="InterPro" id="IPR044492">
    <property type="entry name" value="P_typ_ATPase_HD_dom"/>
</dbReference>
<dbReference type="NCBIfam" id="TIGR01511">
    <property type="entry name" value="ATPase-IB1_Cu"/>
    <property type="match status" value="1"/>
</dbReference>
<dbReference type="NCBIfam" id="TIGR01525">
    <property type="entry name" value="ATPase-IB_hvy"/>
    <property type="match status" value="1"/>
</dbReference>
<dbReference type="NCBIfam" id="TIGR01494">
    <property type="entry name" value="ATPase_P-type"/>
    <property type="match status" value="1"/>
</dbReference>
<dbReference type="PANTHER" id="PTHR43520">
    <property type="entry name" value="ATP7, ISOFORM B"/>
    <property type="match status" value="1"/>
</dbReference>
<dbReference type="PANTHER" id="PTHR43520:SF6">
    <property type="entry name" value="COPPER-EXPORTING P-TYPE ATPASE"/>
    <property type="match status" value="1"/>
</dbReference>
<dbReference type="Pfam" id="PF00122">
    <property type="entry name" value="E1-E2_ATPase"/>
    <property type="match status" value="1"/>
</dbReference>
<dbReference type="Pfam" id="PF00403">
    <property type="entry name" value="HMA"/>
    <property type="match status" value="1"/>
</dbReference>
<dbReference type="Pfam" id="PF00702">
    <property type="entry name" value="Hydrolase"/>
    <property type="match status" value="1"/>
</dbReference>
<dbReference type="PRINTS" id="PR00119">
    <property type="entry name" value="CATATPASE"/>
</dbReference>
<dbReference type="SFLD" id="SFLDS00003">
    <property type="entry name" value="Haloacid_Dehalogenase"/>
    <property type="match status" value="1"/>
</dbReference>
<dbReference type="SFLD" id="SFLDF00027">
    <property type="entry name" value="p-type_atpase"/>
    <property type="match status" value="1"/>
</dbReference>
<dbReference type="SUPFAM" id="SSF81653">
    <property type="entry name" value="Calcium ATPase, transduction domain A"/>
    <property type="match status" value="1"/>
</dbReference>
<dbReference type="SUPFAM" id="SSF81665">
    <property type="entry name" value="Calcium ATPase, transmembrane domain M"/>
    <property type="match status" value="1"/>
</dbReference>
<dbReference type="SUPFAM" id="SSF56784">
    <property type="entry name" value="HAD-like"/>
    <property type="match status" value="1"/>
</dbReference>
<dbReference type="SUPFAM" id="SSF55008">
    <property type="entry name" value="HMA, heavy metal-associated domain"/>
    <property type="match status" value="2"/>
</dbReference>
<dbReference type="PROSITE" id="PS00154">
    <property type="entry name" value="ATPASE_E1_E2"/>
    <property type="match status" value="1"/>
</dbReference>
<dbReference type="PROSITE" id="PS01047">
    <property type="entry name" value="HMA_1"/>
    <property type="match status" value="1"/>
</dbReference>
<dbReference type="PROSITE" id="PS50846">
    <property type="entry name" value="HMA_2"/>
    <property type="match status" value="3"/>
</dbReference>
<reference key="1">
    <citation type="journal article" date="2000" name="Nature">
        <title>DNA sequence of both chromosomes of the cholera pathogen Vibrio cholerae.</title>
        <authorList>
            <person name="Heidelberg J.F."/>
            <person name="Eisen J.A."/>
            <person name="Nelson W.C."/>
            <person name="Clayton R.A."/>
            <person name="Gwinn M.L."/>
            <person name="Dodson R.J."/>
            <person name="Haft D.H."/>
            <person name="Hickey E.K."/>
            <person name="Peterson J.D."/>
            <person name="Umayam L.A."/>
            <person name="Gill S.R."/>
            <person name="Nelson K.E."/>
            <person name="Read T.D."/>
            <person name="Tettelin H."/>
            <person name="Richardson D.L."/>
            <person name="Ermolaeva M.D."/>
            <person name="Vamathevan J.J."/>
            <person name="Bass S."/>
            <person name="Qin H."/>
            <person name="Dragoi I."/>
            <person name="Sellers P."/>
            <person name="McDonald L.A."/>
            <person name="Utterback T.R."/>
            <person name="Fleischmann R.D."/>
            <person name="Nierman W.C."/>
            <person name="White O."/>
            <person name="Salzberg S.L."/>
            <person name="Smith H.O."/>
            <person name="Colwell R.R."/>
            <person name="Mekalanos J.J."/>
            <person name="Venter J.C."/>
            <person name="Fraser C.M."/>
        </authorList>
    </citation>
    <scope>NUCLEOTIDE SEQUENCE [LARGE SCALE GENOMIC DNA]</scope>
    <source>
        <strain>ATCC 39315 / El Tor Inaba N16961</strain>
    </source>
</reference>
<keyword id="KW-0067">ATP-binding</keyword>
<keyword id="KW-1003">Cell membrane</keyword>
<keyword id="KW-0186">Copper</keyword>
<keyword id="KW-0187">Copper transport</keyword>
<keyword id="KW-0406">Ion transport</keyword>
<keyword id="KW-0460">Magnesium</keyword>
<keyword id="KW-0472">Membrane</keyword>
<keyword id="KW-0479">Metal-binding</keyword>
<keyword id="KW-0547">Nucleotide-binding</keyword>
<keyword id="KW-0597">Phosphoprotein</keyword>
<keyword id="KW-1185">Reference proteome</keyword>
<keyword id="KW-0677">Repeat</keyword>
<keyword id="KW-1278">Translocase</keyword>
<keyword id="KW-0812">Transmembrane</keyword>
<keyword id="KW-1133">Transmembrane helix</keyword>
<keyword id="KW-0813">Transport</keyword>
<protein>
    <recommendedName>
        <fullName>Copper-exporting P-type ATPase</fullName>
        <ecNumber>7.2.2.8</ecNumber>
    </recommendedName>
    <alternativeName>
        <fullName>Copper-exporting P-type ATPase A</fullName>
    </alternativeName>
    <alternativeName>
        <fullName>Cu(+)-exporting ATPase</fullName>
    </alternativeName>
</protein>
<organism>
    <name type="scientific">Vibrio cholerae serotype O1 (strain ATCC 39315 / El Tor Inaba N16961)</name>
    <dbReference type="NCBI Taxonomy" id="243277"/>
    <lineage>
        <taxon>Bacteria</taxon>
        <taxon>Pseudomonadati</taxon>
        <taxon>Pseudomonadota</taxon>
        <taxon>Gammaproteobacteria</taxon>
        <taxon>Vibrionales</taxon>
        <taxon>Vibrionaceae</taxon>
        <taxon>Vibrio</taxon>
    </lineage>
</organism>
<proteinExistence type="inferred from homology"/>
<comment type="function">
    <text evidence="1">Involved in copper export.</text>
</comment>
<comment type="catalytic activity">
    <reaction>
        <text>Cu(+)(in) + ATP + H2O = Cu(+)(out) + ADP + phosphate + H(+)</text>
        <dbReference type="Rhea" id="RHEA:25792"/>
        <dbReference type="ChEBI" id="CHEBI:15377"/>
        <dbReference type="ChEBI" id="CHEBI:15378"/>
        <dbReference type="ChEBI" id="CHEBI:30616"/>
        <dbReference type="ChEBI" id="CHEBI:43474"/>
        <dbReference type="ChEBI" id="CHEBI:49552"/>
        <dbReference type="ChEBI" id="CHEBI:456216"/>
        <dbReference type="EC" id="7.2.2.8"/>
    </reaction>
</comment>
<comment type="subcellular location">
    <subcellularLocation>
        <location evidence="5">Cell membrane</location>
        <topology evidence="5">Multi-pass membrane protein</topology>
    </subcellularLocation>
</comment>
<comment type="similarity">
    <text evidence="5">Belongs to the cation transport ATPase (P-type) (TC 3.A.3) family. Type IB subfamily.</text>
</comment>